<comment type="function">
    <text evidence="4">Catalyzes the synthesis of cyclic-di-GMP (c-di-GMP) via the condensation of 2 GTP molecules. Cyclic-di-GMP is a second messenger which controls cell surface-associated traits in bacteria.</text>
</comment>
<comment type="catalytic activity">
    <reaction evidence="4">
        <text>2 GTP = 3',3'-c-di-GMP + 2 diphosphate</text>
        <dbReference type="Rhea" id="RHEA:24898"/>
        <dbReference type="ChEBI" id="CHEBI:33019"/>
        <dbReference type="ChEBI" id="CHEBI:37565"/>
        <dbReference type="ChEBI" id="CHEBI:58805"/>
        <dbReference type="EC" id="2.7.7.65"/>
    </reaction>
</comment>
<comment type="cofactor">
    <cofactor evidence="1">
        <name>Mg(2+)</name>
        <dbReference type="ChEBI" id="CHEBI:18420"/>
    </cofactor>
    <text evidence="1">Binds 1 Mg(2+) ion per monomer.</text>
</comment>
<comment type="pathway">
    <text evidence="1">Purine metabolism; 3',5'-cyclic di-GMP biosynthesis.</text>
</comment>
<comment type="subunit">
    <text evidence="1">Homodimer.</text>
</comment>
<comment type="induction">
    <text evidence="5">Expressed during exponential and post-exponential growth at both 28 and 37 degrees Celsius.</text>
</comment>
<comment type="disruption phenotype">
    <text evidence="5">Decreased expression of CsgB, decreased curli expression at 28 degrees Celsius.</text>
</comment>
<accession>P76245</accession>
<accession>P94742</accession>
<accession>P97193</accession>
<evidence type="ECO:0000250" key="1">
    <source>
        <dbReference type="UniProtKB" id="P31129"/>
    </source>
</evidence>
<evidence type="ECO:0000255" key="2"/>
<evidence type="ECO:0000255" key="3">
    <source>
        <dbReference type="PROSITE-ProRule" id="PRU00095"/>
    </source>
</evidence>
<evidence type="ECO:0000269" key="4">
    <source>
    </source>
</evidence>
<evidence type="ECO:0000269" key="5">
    <source>
    </source>
</evidence>
<evidence type="ECO:0000303" key="6">
    <source>
    </source>
</evidence>
<evidence type="ECO:0000305" key="7"/>
<feature type="chain" id="PRO_0000169024" description="Diguanylate cyclase DgcP">
    <location>
        <begin position="1"/>
        <end position="341"/>
    </location>
</feature>
<feature type="domain" description="GAF">
    <location>
        <begin position="18"/>
        <end position="154"/>
    </location>
</feature>
<feature type="domain" description="GGDEF" evidence="3">
    <location>
        <begin position="204"/>
        <end position="337"/>
    </location>
</feature>
<feature type="active site" description="Proton acceptor" evidence="2">
    <location>
        <position position="255"/>
    </location>
</feature>
<feature type="binding site" evidence="1">
    <location>
        <position position="212"/>
    </location>
    <ligand>
        <name>Mg(2+)</name>
        <dbReference type="ChEBI" id="CHEBI:18420"/>
    </ligand>
</feature>
<feature type="binding site" evidence="1">
    <location>
        <position position="220"/>
    </location>
    <ligand>
        <name>substrate</name>
    </ligand>
</feature>
<feature type="binding site" evidence="1">
    <location>
        <position position="225"/>
    </location>
    <ligand>
        <name>substrate</name>
    </ligand>
</feature>
<feature type="binding site" evidence="1">
    <location>
        <position position="229"/>
    </location>
    <ligand>
        <name>substrate</name>
    </ligand>
</feature>
<feature type="binding site" evidence="1">
    <location>
        <position position="255"/>
    </location>
    <ligand>
        <name>Mg(2+)</name>
        <dbReference type="ChEBI" id="CHEBI:18420"/>
    </ligand>
</feature>
<feature type="site" description="Transition state stabilizer" evidence="2">
    <location>
        <position position="217"/>
    </location>
</feature>
<reference key="1">
    <citation type="journal article" date="1996" name="DNA Res.">
        <title>A 460-kb DNA sequence of the Escherichia coli K-12 genome corresponding to the 40.1-50.0 min region on the linkage map.</title>
        <authorList>
            <person name="Itoh T."/>
            <person name="Aiba H."/>
            <person name="Baba T."/>
            <person name="Fujita K."/>
            <person name="Hayashi K."/>
            <person name="Inada T."/>
            <person name="Isono K."/>
            <person name="Kasai H."/>
            <person name="Kimura S."/>
            <person name="Kitakawa M."/>
            <person name="Kitagawa M."/>
            <person name="Makino K."/>
            <person name="Miki T."/>
            <person name="Mizobuchi K."/>
            <person name="Mori H."/>
            <person name="Mori T."/>
            <person name="Motomura K."/>
            <person name="Nakade S."/>
            <person name="Nakamura Y."/>
            <person name="Nashimoto H."/>
            <person name="Nishio Y."/>
            <person name="Oshima T."/>
            <person name="Saito N."/>
            <person name="Sampei G."/>
            <person name="Seki Y."/>
            <person name="Sivasundaram S."/>
            <person name="Tagami H."/>
            <person name="Takeda J."/>
            <person name="Takemoto K."/>
            <person name="Wada C."/>
            <person name="Yamamoto Y."/>
            <person name="Horiuchi T."/>
        </authorList>
    </citation>
    <scope>NUCLEOTIDE SEQUENCE [LARGE SCALE GENOMIC DNA]</scope>
    <source>
        <strain>K12 / W3110 / ATCC 27325 / DSM 5911</strain>
    </source>
</reference>
<reference key="2">
    <citation type="journal article" date="1997" name="Science">
        <title>The complete genome sequence of Escherichia coli K-12.</title>
        <authorList>
            <person name="Blattner F.R."/>
            <person name="Plunkett G. III"/>
            <person name="Bloch C.A."/>
            <person name="Perna N.T."/>
            <person name="Burland V."/>
            <person name="Riley M."/>
            <person name="Collado-Vides J."/>
            <person name="Glasner J.D."/>
            <person name="Rode C.K."/>
            <person name="Mayhew G.F."/>
            <person name="Gregor J."/>
            <person name="Davis N.W."/>
            <person name="Kirkpatrick H.A."/>
            <person name="Goeden M.A."/>
            <person name="Rose D.J."/>
            <person name="Mau B."/>
            <person name="Shao Y."/>
        </authorList>
    </citation>
    <scope>NUCLEOTIDE SEQUENCE [LARGE SCALE GENOMIC DNA]</scope>
    <source>
        <strain>K12 / MG1655 / ATCC 47076</strain>
    </source>
</reference>
<reference key="3">
    <citation type="journal article" date="2006" name="Mol. Syst. Biol.">
        <title>Highly accurate genome sequences of Escherichia coli K-12 strains MG1655 and W3110.</title>
        <authorList>
            <person name="Hayashi K."/>
            <person name="Morooka N."/>
            <person name="Yamamoto Y."/>
            <person name="Fujita K."/>
            <person name="Isono K."/>
            <person name="Choi S."/>
            <person name="Ohtsubo E."/>
            <person name="Baba T."/>
            <person name="Wanner B.L."/>
            <person name="Mori H."/>
            <person name="Horiuchi T."/>
        </authorList>
    </citation>
    <scope>NUCLEOTIDE SEQUENCE [LARGE SCALE GENOMIC DNA]</scope>
    <source>
        <strain>K12 / W3110 / ATCC 27325 / DSM 5911</strain>
    </source>
</reference>
<reference key="4">
    <citation type="journal article" date="2005" name="J. Bacteriol.">
        <title>Cyclic diguanylate is a ubiquitous signaling molecule in bacteria: insights into biochemistry of the GGDEF protein domain.</title>
        <authorList>
            <person name="Ryjenkov D.A."/>
            <person name="Tarutina M."/>
            <person name="Moskvin O.V."/>
            <person name="Gomelsky M."/>
        </authorList>
    </citation>
    <scope>FUNCTION AS A DIGUANYLATE CYCLASE</scope>
    <scope>CATALYTIC ACTIVITY</scope>
    <source>
        <strain>K12 / DH5-alpha</strain>
    </source>
</reference>
<reference key="5">
    <citation type="journal article" date="2009" name="Microbiology">
        <title>Gene expression patterns and differential input into curli fimbriae regulation of all GGDEF/EAL domain proteins in Escherichia coli.</title>
        <authorList>
            <person name="Sommerfeldt N."/>
            <person name="Possling A."/>
            <person name="Becker G."/>
            <person name="Pesavento C."/>
            <person name="Tschowri N."/>
            <person name="Hengge R."/>
        </authorList>
    </citation>
    <scope>INDUCTION</scope>
    <scope>DISRUPTION PHENOTYPE</scope>
    <source>
        <strain>K12 / W3110 / ATCC 27325 / DSM 5911</strain>
    </source>
</reference>
<reference key="6">
    <citation type="journal article" date="2015" name="J. Bacteriol.">
        <title>Systematic nomenclature for GGDEF and EAL domain-containing cyclic di-GMP turnover proteins of Escherichia coli.</title>
        <authorList>
            <person name="Hengge R."/>
            <person name="Galperin M.Y."/>
            <person name="Ghigo J.M."/>
            <person name="Gomelsky M."/>
            <person name="Green J."/>
            <person name="Hughes K.T."/>
            <person name="Jenal U."/>
            <person name="Landini P."/>
        </authorList>
    </citation>
    <scope>NOMENCLATURE</scope>
</reference>
<sequence length="341" mass="38546">MSDQIIARVSQSLAKEQSLESLVRQLLEMLEMVTDMESTYLTKVDVEARLQHIMFARNSQKMYIPENFTVSWDYSLCKRAIDENCFFSDEVPDRWGDCIAARNLGITTFLSTPIHLPDGSFYGTLCAASSEKRQWSERAEQVLQLFAGLIAQYIQKEALVEQLREANAALIAQSYTDSLTGLPNRRAIFENLTTLFSLARHLNHKIMIAFIDLDNFKLINDRFGHNSGDLFLIQVGERLNTLQQNGEVIGRLGGDEFLVVSLNNENADISSLRERIQQQIRGEYHLGDVDLYYPGASLGIVEVDPETTDADSALHAADIAMYQEKKHKQKTPFVAHPALHS</sequence>
<gene>
    <name evidence="6" type="primary">dgcP</name>
    <name type="synonym">yeaP</name>
    <name type="ordered locus">b1794</name>
    <name type="ordered locus">JW5292</name>
</gene>
<proteinExistence type="evidence at protein level"/>
<dbReference type="EC" id="2.7.7.65" evidence="4"/>
<dbReference type="EMBL" id="U00096">
    <property type="protein sequence ID" value="AAC74864.2"/>
    <property type="molecule type" value="Genomic_DNA"/>
</dbReference>
<dbReference type="EMBL" id="AP009048">
    <property type="protein sequence ID" value="BAA15592.1"/>
    <property type="molecule type" value="Genomic_DNA"/>
</dbReference>
<dbReference type="PIR" id="B64940">
    <property type="entry name" value="B64940"/>
</dbReference>
<dbReference type="RefSeq" id="NP_416308.4">
    <property type="nucleotide sequence ID" value="NC_000913.3"/>
</dbReference>
<dbReference type="RefSeq" id="WP_001310896.1">
    <property type="nucleotide sequence ID" value="NZ_SSZK01000001.1"/>
</dbReference>
<dbReference type="SMR" id="P76245"/>
<dbReference type="BioGRID" id="4260330">
    <property type="interactions" value="27"/>
</dbReference>
<dbReference type="BioGRID" id="853223">
    <property type="interactions" value="1"/>
</dbReference>
<dbReference type="DIP" id="DIP-11795N"/>
<dbReference type="FunCoup" id="P76245">
    <property type="interactions" value="166"/>
</dbReference>
<dbReference type="IntAct" id="P76245">
    <property type="interactions" value="3"/>
</dbReference>
<dbReference type="STRING" id="511145.b1794"/>
<dbReference type="jPOST" id="P76245"/>
<dbReference type="PaxDb" id="511145-b1794"/>
<dbReference type="EnsemblBacteria" id="AAC74864">
    <property type="protein sequence ID" value="AAC74864"/>
    <property type="gene ID" value="b1794"/>
</dbReference>
<dbReference type="GeneID" id="948969"/>
<dbReference type="KEGG" id="ecj:JW5292"/>
<dbReference type="KEGG" id="eco:b1794"/>
<dbReference type="KEGG" id="ecoc:C3026_10225"/>
<dbReference type="PATRIC" id="fig|1411691.4.peg.461"/>
<dbReference type="EchoBASE" id="EB3275"/>
<dbReference type="eggNOG" id="COG2199">
    <property type="taxonomic scope" value="Bacteria"/>
</dbReference>
<dbReference type="eggNOG" id="COG2203">
    <property type="taxonomic scope" value="Bacteria"/>
</dbReference>
<dbReference type="HOGENOM" id="CLU_000445_11_32_6"/>
<dbReference type="InParanoid" id="P76245"/>
<dbReference type="OMA" id="RMESTYL"/>
<dbReference type="OrthoDB" id="9812260at2"/>
<dbReference type="PhylomeDB" id="P76245"/>
<dbReference type="BioCyc" id="EcoCyc:G6980-MONOMER"/>
<dbReference type="BioCyc" id="MetaCyc:G6980-MONOMER"/>
<dbReference type="UniPathway" id="UPA00599"/>
<dbReference type="PRO" id="PR:P76245"/>
<dbReference type="Proteomes" id="UP000000625">
    <property type="component" value="Chromosome"/>
</dbReference>
<dbReference type="GO" id="GO:0005886">
    <property type="term" value="C:plasma membrane"/>
    <property type="evidence" value="ECO:0000318"/>
    <property type="project" value="GO_Central"/>
</dbReference>
<dbReference type="GO" id="GO:0052621">
    <property type="term" value="F:diguanylate cyclase activity"/>
    <property type="evidence" value="ECO:0000314"/>
    <property type="project" value="EcoCyc"/>
</dbReference>
<dbReference type="GO" id="GO:0005525">
    <property type="term" value="F:GTP binding"/>
    <property type="evidence" value="ECO:0007669"/>
    <property type="project" value="UniProtKB-KW"/>
</dbReference>
<dbReference type="GO" id="GO:0046872">
    <property type="term" value="F:metal ion binding"/>
    <property type="evidence" value="ECO:0007669"/>
    <property type="project" value="UniProtKB-KW"/>
</dbReference>
<dbReference type="GO" id="GO:0043709">
    <property type="term" value="P:cell adhesion involved in single-species biofilm formation"/>
    <property type="evidence" value="ECO:0000318"/>
    <property type="project" value="GO_Central"/>
</dbReference>
<dbReference type="GO" id="GO:1902201">
    <property type="term" value="P:negative regulation of bacterial-type flagellum-dependent cell motility"/>
    <property type="evidence" value="ECO:0000318"/>
    <property type="project" value="GO_Central"/>
</dbReference>
<dbReference type="CDD" id="cd01949">
    <property type="entry name" value="GGDEF"/>
    <property type="match status" value="1"/>
</dbReference>
<dbReference type="Gene3D" id="3.30.450.40">
    <property type="match status" value="1"/>
</dbReference>
<dbReference type="Gene3D" id="3.30.70.270">
    <property type="match status" value="1"/>
</dbReference>
<dbReference type="InterPro" id="IPR050469">
    <property type="entry name" value="Diguanylate_Cyclase"/>
</dbReference>
<dbReference type="InterPro" id="IPR003018">
    <property type="entry name" value="GAF"/>
</dbReference>
<dbReference type="InterPro" id="IPR029016">
    <property type="entry name" value="GAF-like_dom_sf"/>
</dbReference>
<dbReference type="InterPro" id="IPR000160">
    <property type="entry name" value="GGDEF_dom"/>
</dbReference>
<dbReference type="InterPro" id="IPR029787">
    <property type="entry name" value="Nucleotide_cyclase"/>
</dbReference>
<dbReference type="InterPro" id="IPR043128">
    <property type="entry name" value="Rev_trsase/Diguanyl_cyclase"/>
</dbReference>
<dbReference type="NCBIfam" id="TIGR00254">
    <property type="entry name" value="GGDEF"/>
    <property type="match status" value="1"/>
</dbReference>
<dbReference type="PANTHER" id="PTHR45138:SF9">
    <property type="entry name" value="DIGUANYLATE CYCLASE DGCM-RELATED"/>
    <property type="match status" value="1"/>
</dbReference>
<dbReference type="PANTHER" id="PTHR45138">
    <property type="entry name" value="REGULATORY COMPONENTS OF SENSORY TRANSDUCTION SYSTEM"/>
    <property type="match status" value="1"/>
</dbReference>
<dbReference type="Pfam" id="PF13185">
    <property type="entry name" value="GAF_2"/>
    <property type="match status" value="1"/>
</dbReference>
<dbReference type="Pfam" id="PF00990">
    <property type="entry name" value="GGDEF"/>
    <property type="match status" value="1"/>
</dbReference>
<dbReference type="SMART" id="SM00065">
    <property type="entry name" value="GAF"/>
    <property type="match status" value="1"/>
</dbReference>
<dbReference type="SMART" id="SM00267">
    <property type="entry name" value="GGDEF"/>
    <property type="match status" value="1"/>
</dbReference>
<dbReference type="SUPFAM" id="SSF55781">
    <property type="entry name" value="GAF domain-like"/>
    <property type="match status" value="1"/>
</dbReference>
<dbReference type="SUPFAM" id="SSF55073">
    <property type="entry name" value="Nucleotide cyclase"/>
    <property type="match status" value="1"/>
</dbReference>
<dbReference type="PROSITE" id="PS50887">
    <property type="entry name" value="GGDEF"/>
    <property type="match status" value="1"/>
</dbReference>
<keyword id="KW-0342">GTP-binding</keyword>
<keyword id="KW-0460">Magnesium</keyword>
<keyword id="KW-0479">Metal-binding</keyword>
<keyword id="KW-0547">Nucleotide-binding</keyword>
<keyword id="KW-1185">Reference proteome</keyword>
<keyword id="KW-0808">Transferase</keyword>
<name>DGCP_ECOLI</name>
<protein>
    <recommendedName>
        <fullName evidence="7">Diguanylate cyclase DgcP</fullName>
        <shortName evidence="7">DGC</shortName>
        <ecNumber evidence="4">2.7.7.65</ecNumber>
    </recommendedName>
</protein>
<organism>
    <name type="scientific">Escherichia coli (strain K12)</name>
    <dbReference type="NCBI Taxonomy" id="83333"/>
    <lineage>
        <taxon>Bacteria</taxon>
        <taxon>Pseudomonadati</taxon>
        <taxon>Pseudomonadota</taxon>
        <taxon>Gammaproteobacteria</taxon>
        <taxon>Enterobacterales</taxon>
        <taxon>Enterobacteriaceae</taxon>
        <taxon>Escherichia</taxon>
    </lineage>
</organism>